<dbReference type="EC" id="1.17.7.3" evidence="1"/>
<dbReference type="EMBL" id="CP000036">
    <property type="protein sequence ID" value="ABB67083.1"/>
    <property type="molecule type" value="Genomic_DNA"/>
</dbReference>
<dbReference type="RefSeq" id="WP_000551818.1">
    <property type="nucleotide sequence ID" value="NC_007613.1"/>
</dbReference>
<dbReference type="SMR" id="Q31XX5"/>
<dbReference type="GeneID" id="93774621"/>
<dbReference type="KEGG" id="sbo:SBO_2539"/>
<dbReference type="HOGENOM" id="CLU_042258_0_0_6"/>
<dbReference type="UniPathway" id="UPA00056">
    <property type="reaction ID" value="UER00096"/>
</dbReference>
<dbReference type="Proteomes" id="UP000007067">
    <property type="component" value="Chromosome"/>
</dbReference>
<dbReference type="GO" id="GO:0051539">
    <property type="term" value="F:4 iron, 4 sulfur cluster binding"/>
    <property type="evidence" value="ECO:0007669"/>
    <property type="project" value="UniProtKB-UniRule"/>
</dbReference>
<dbReference type="GO" id="GO:0046429">
    <property type="term" value="F:4-hydroxy-3-methylbut-2-en-1-yl diphosphate synthase activity (ferredoxin)"/>
    <property type="evidence" value="ECO:0007669"/>
    <property type="project" value="UniProtKB-UniRule"/>
</dbReference>
<dbReference type="GO" id="GO:0141197">
    <property type="term" value="F:4-hydroxy-3-methylbut-2-enyl-diphosphate synthase activity (flavodoxin)"/>
    <property type="evidence" value="ECO:0007669"/>
    <property type="project" value="UniProtKB-EC"/>
</dbReference>
<dbReference type="GO" id="GO:0005506">
    <property type="term" value="F:iron ion binding"/>
    <property type="evidence" value="ECO:0007669"/>
    <property type="project" value="InterPro"/>
</dbReference>
<dbReference type="GO" id="GO:0019288">
    <property type="term" value="P:isopentenyl diphosphate biosynthetic process, methylerythritol 4-phosphate pathway"/>
    <property type="evidence" value="ECO:0007669"/>
    <property type="project" value="UniProtKB-UniRule"/>
</dbReference>
<dbReference type="GO" id="GO:0016114">
    <property type="term" value="P:terpenoid biosynthetic process"/>
    <property type="evidence" value="ECO:0007669"/>
    <property type="project" value="InterPro"/>
</dbReference>
<dbReference type="FunFam" id="3.20.20.20:FF:000001">
    <property type="entry name" value="4-hydroxy-3-methylbut-2-en-1-yl diphosphate synthase (flavodoxin)"/>
    <property type="match status" value="1"/>
</dbReference>
<dbReference type="FunFam" id="3.30.413.10:FF:000002">
    <property type="entry name" value="4-hydroxy-3-methylbut-2-en-1-yl diphosphate synthase (flavodoxin)"/>
    <property type="match status" value="1"/>
</dbReference>
<dbReference type="Gene3D" id="3.20.20.20">
    <property type="entry name" value="Dihydropteroate synthase-like"/>
    <property type="match status" value="1"/>
</dbReference>
<dbReference type="Gene3D" id="3.30.413.10">
    <property type="entry name" value="Sulfite Reductase Hemoprotein, domain 1"/>
    <property type="match status" value="1"/>
</dbReference>
<dbReference type="HAMAP" id="MF_00159">
    <property type="entry name" value="IspG"/>
    <property type="match status" value="1"/>
</dbReference>
<dbReference type="InterPro" id="IPR011005">
    <property type="entry name" value="Dihydropteroate_synth-like_sf"/>
</dbReference>
<dbReference type="InterPro" id="IPR016425">
    <property type="entry name" value="IspG_bac"/>
</dbReference>
<dbReference type="InterPro" id="IPR004588">
    <property type="entry name" value="IspG_bac-typ"/>
</dbReference>
<dbReference type="InterPro" id="IPR045854">
    <property type="entry name" value="NO2/SO3_Rdtase_4Fe4S_sf"/>
</dbReference>
<dbReference type="NCBIfam" id="TIGR00612">
    <property type="entry name" value="ispG_gcpE"/>
    <property type="match status" value="1"/>
</dbReference>
<dbReference type="NCBIfam" id="NF001540">
    <property type="entry name" value="PRK00366.1"/>
    <property type="match status" value="1"/>
</dbReference>
<dbReference type="PANTHER" id="PTHR30454">
    <property type="entry name" value="4-HYDROXY-3-METHYLBUT-2-EN-1-YL DIPHOSPHATE SYNTHASE"/>
    <property type="match status" value="1"/>
</dbReference>
<dbReference type="PANTHER" id="PTHR30454:SF0">
    <property type="entry name" value="4-HYDROXY-3-METHYLBUT-2-EN-1-YL DIPHOSPHATE SYNTHASE (FERREDOXIN), CHLOROPLASTIC"/>
    <property type="match status" value="1"/>
</dbReference>
<dbReference type="Pfam" id="PF04551">
    <property type="entry name" value="GcpE"/>
    <property type="match status" value="1"/>
</dbReference>
<dbReference type="PIRSF" id="PIRSF004640">
    <property type="entry name" value="IspG"/>
    <property type="match status" value="1"/>
</dbReference>
<dbReference type="SUPFAM" id="SSF51717">
    <property type="entry name" value="Dihydropteroate synthetase-like"/>
    <property type="match status" value="1"/>
</dbReference>
<dbReference type="SUPFAM" id="SSF56014">
    <property type="entry name" value="Nitrite and sulphite reductase 4Fe-4S domain-like"/>
    <property type="match status" value="1"/>
</dbReference>
<reference key="1">
    <citation type="journal article" date="2005" name="Nucleic Acids Res.">
        <title>Genome dynamics and diversity of Shigella species, the etiologic agents of bacillary dysentery.</title>
        <authorList>
            <person name="Yang F."/>
            <person name="Yang J."/>
            <person name="Zhang X."/>
            <person name="Chen L."/>
            <person name="Jiang Y."/>
            <person name="Yan Y."/>
            <person name="Tang X."/>
            <person name="Wang J."/>
            <person name="Xiong Z."/>
            <person name="Dong J."/>
            <person name="Xue Y."/>
            <person name="Zhu Y."/>
            <person name="Xu X."/>
            <person name="Sun L."/>
            <person name="Chen S."/>
            <person name="Nie H."/>
            <person name="Peng J."/>
            <person name="Xu J."/>
            <person name="Wang Y."/>
            <person name="Yuan Z."/>
            <person name="Wen Y."/>
            <person name="Yao Z."/>
            <person name="Shen Y."/>
            <person name="Qiang B."/>
            <person name="Hou Y."/>
            <person name="Yu J."/>
            <person name="Jin Q."/>
        </authorList>
    </citation>
    <scope>NUCLEOTIDE SEQUENCE [LARGE SCALE GENOMIC DNA]</scope>
    <source>
        <strain>Sb227</strain>
    </source>
</reference>
<organism>
    <name type="scientific">Shigella boydii serotype 4 (strain Sb227)</name>
    <dbReference type="NCBI Taxonomy" id="300268"/>
    <lineage>
        <taxon>Bacteria</taxon>
        <taxon>Pseudomonadati</taxon>
        <taxon>Pseudomonadota</taxon>
        <taxon>Gammaproteobacteria</taxon>
        <taxon>Enterobacterales</taxon>
        <taxon>Enterobacteriaceae</taxon>
        <taxon>Shigella</taxon>
    </lineage>
</organism>
<accession>Q31XX5</accession>
<feature type="chain" id="PRO_1000011525" description="4-hydroxy-3-methylbut-2-en-1-yl diphosphate synthase (flavodoxin)">
    <location>
        <begin position="1"/>
        <end position="372"/>
    </location>
</feature>
<feature type="binding site" evidence="1">
    <location>
        <position position="270"/>
    </location>
    <ligand>
        <name>[4Fe-4S] cluster</name>
        <dbReference type="ChEBI" id="CHEBI:49883"/>
    </ligand>
</feature>
<feature type="binding site" evidence="1">
    <location>
        <position position="273"/>
    </location>
    <ligand>
        <name>[4Fe-4S] cluster</name>
        <dbReference type="ChEBI" id="CHEBI:49883"/>
    </ligand>
</feature>
<feature type="binding site" evidence="1">
    <location>
        <position position="305"/>
    </location>
    <ligand>
        <name>[4Fe-4S] cluster</name>
        <dbReference type="ChEBI" id="CHEBI:49883"/>
    </ligand>
</feature>
<feature type="binding site" evidence="1">
    <location>
        <position position="312"/>
    </location>
    <ligand>
        <name>[4Fe-4S] cluster</name>
        <dbReference type="ChEBI" id="CHEBI:49883"/>
    </ligand>
</feature>
<keyword id="KW-0004">4Fe-4S</keyword>
<keyword id="KW-0408">Iron</keyword>
<keyword id="KW-0411">Iron-sulfur</keyword>
<keyword id="KW-0414">Isoprene biosynthesis</keyword>
<keyword id="KW-0479">Metal-binding</keyword>
<keyword id="KW-0560">Oxidoreductase</keyword>
<comment type="function">
    <text evidence="1">Converts 2C-methyl-D-erythritol 2,4-cyclodiphosphate (ME-2,4cPP) into 1-hydroxy-2-methyl-2-(E)-butenyl 4-diphosphate.</text>
</comment>
<comment type="catalytic activity">
    <reaction evidence="1">
        <text>(2E)-4-hydroxy-3-methylbut-2-enyl diphosphate + oxidized [flavodoxin] + H2O + 2 H(+) = 2-C-methyl-D-erythritol 2,4-cyclic diphosphate + reduced [flavodoxin]</text>
        <dbReference type="Rhea" id="RHEA:43604"/>
        <dbReference type="Rhea" id="RHEA-COMP:10622"/>
        <dbReference type="Rhea" id="RHEA-COMP:10623"/>
        <dbReference type="ChEBI" id="CHEBI:15377"/>
        <dbReference type="ChEBI" id="CHEBI:15378"/>
        <dbReference type="ChEBI" id="CHEBI:57618"/>
        <dbReference type="ChEBI" id="CHEBI:58210"/>
        <dbReference type="ChEBI" id="CHEBI:58483"/>
        <dbReference type="ChEBI" id="CHEBI:128753"/>
        <dbReference type="EC" id="1.17.7.3"/>
    </reaction>
</comment>
<comment type="cofactor">
    <cofactor evidence="1">
        <name>[4Fe-4S] cluster</name>
        <dbReference type="ChEBI" id="CHEBI:49883"/>
    </cofactor>
    <text evidence="1">Binds 1 [4Fe-4S] cluster.</text>
</comment>
<comment type="pathway">
    <text evidence="1">Isoprenoid biosynthesis; isopentenyl diphosphate biosynthesis via DXP pathway; isopentenyl diphosphate from 1-deoxy-D-xylulose 5-phosphate: step 5/6.</text>
</comment>
<comment type="similarity">
    <text evidence="1">Belongs to the IspG family.</text>
</comment>
<protein>
    <recommendedName>
        <fullName evidence="1">4-hydroxy-3-methylbut-2-en-1-yl diphosphate synthase (flavodoxin)</fullName>
        <ecNumber evidence="1">1.17.7.3</ecNumber>
    </recommendedName>
    <alternativeName>
        <fullName evidence="1">1-hydroxy-2-methyl-2-(E)-butenyl 4-diphosphate synthase</fullName>
    </alternativeName>
</protein>
<proteinExistence type="inferred from homology"/>
<name>ISPG_SHIBS</name>
<sequence length="372" mass="40712">MHNQAPIQRRKSTRIYVGNVPIGDGAPIAVQSMTNTRTTDVEATVNQIKALERVGADIVRVSVPTMDAAEAFKLIKQRVNVPLVADIHFDYRIALKVAEYGVDCLRINPGNIGNEERIRMVVDCARDKNIPIRIGVNAGSLEKDLQEKYGEPTPQALLESAMRHVDHLDRLNFDQFKVSVKASDVFLAVESYRLLAKQIDQPLHLGITEAGGARSGAVKSAIGLGLLLSEGIGDTLRVSLAADPVEEIKVGFDILKSLRIRSRGINFIACPTCSRQEFDVIGTVNALEQRLEDIITPMDVSIIGCVVNGPGEALVSTLGVTGGNKKSGLYEDGVRKDRLDNNDMIDQLEARIRAKASQLDEARRIDVQQVEK</sequence>
<gene>
    <name evidence="1" type="primary">ispG</name>
    <name type="ordered locus">SBO_2539</name>
</gene>
<evidence type="ECO:0000255" key="1">
    <source>
        <dbReference type="HAMAP-Rule" id="MF_00159"/>
    </source>
</evidence>